<dbReference type="EMBL" id="X56144">
    <property type="protein sequence ID" value="CAA39609.1"/>
    <property type="molecule type" value="Genomic_DNA"/>
</dbReference>
<dbReference type="EMBL" id="X53985">
    <property type="protein sequence ID" value="CAA37933.1"/>
    <property type="molecule type" value="Genomic_DNA"/>
</dbReference>
<dbReference type="EMBL" id="M73252">
    <property type="protein sequence ID" value="AAA22345.1"/>
    <property type="molecule type" value="Genomic_DNA"/>
</dbReference>
<dbReference type="PIR" id="I40572">
    <property type="entry name" value="I40572"/>
</dbReference>
<dbReference type="SMR" id="Q57458"/>
<dbReference type="GO" id="GO:0005102">
    <property type="term" value="F:signaling receptor binding"/>
    <property type="evidence" value="ECO:0007669"/>
    <property type="project" value="InterPro"/>
</dbReference>
<dbReference type="GO" id="GO:0090729">
    <property type="term" value="F:toxin activity"/>
    <property type="evidence" value="ECO:0007669"/>
    <property type="project" value="UniProtKB-KW"/>
</dbReference>
<dbReference type="GO" id="GO:0030435">
    <property type="term" value="P:sporulation resulting in formation of a cellular spore"/>
    <property type="evidence" value="ECO:0007669"/>
    <property type="project" value="UniProtKB-KW"/>
</dbReference>
<dbReference type="GO" id="GO:0001907">
    <property type="term" value="P:symbiont-mediated killing of host cell"/>
    <property type="evidence" value="ECO:0007669"/>
    <property type="project" value="InterPro"/>
</dbReference>
<dbReference type="CDD" id="cd04085">
    <property type="entry name" value="delta_endotoxin_C"/>
    <property type="match status" value="1"/>
</dbReference>
<dbReference type="Gene3D" id="2.60.120.260">
    <property type="entry name" value="Galactose-binding domain-like"/>
    <property type="match status" value="2"/>
</dbReference>
<dbReference type="Gene3D" id="2.100.10.10">
    <property type="entry name" value="Pesticidal crystal protein, central domain"/>
    <property type="match status" value="1"/>
</dbReference>
<dbReference type="Gene3D" id="1.20.190.10">
    <property type="entry name" value="Pesticidal crystal protein, N-terminal domain"/>
    <property type="match status" value="1"/>
</dbReference>
<dbReference type="InterPro" id="IPR048645">
    <property type="entry name" value="Cry1Ac-like_dom-VII"/>
</dbReference>
<dbReference type="InterPro" id="IPR041587">
    <property type="entry name" value="Cry_V"/>
</dbReference>
<dbReference type="InterPro" id="IPR008979">
    <property type="entry name" value="Galactose-bd-like_sf"/>
</dbReference>
<dbReference type="InterPro" id="IPR038979">
    <property type="entry name" value="Pest_crys"/>
</dbReference>
<dbReference type="InterPro" id="IPR054544">
    <property type="entry name" value="Pest_crys_Cry1Aa_dom-IV"/>
</dbReference>
<dbReference type="InterPro" id="IPR005638">
    <property type="entry name" value="Pest_crys_dom-III"/>
</dbReference>
<dbReference type="InterPro" id="IPR005639">
    <property type="entry name" value="Pest_crys_dom_I"/>
</dbReference>
<dbReference type="InterPro" id="IPR036716">
    <property type="entry name" value="Pest_crys_N_sf"/>
</dbReference>
<dbReference type="InterPro" id="IPR036399">
    <property type="entry name" value="Pest_cryst_cen_dom_sf"/>
</dbReference>
<dbReference type="InterPro" id="IPR001178">
    <property type="entry name" value="Pest_cryst_dom_II"/>
</dbReference>
<dbReference type="PANTHER" id="PTHR37003">
    <property type="entry name" value="ENDOTOXIN_N DOMAIN-CONTAINING PROTEIN-RELATED"/>
    <property type="match status" value="1"/>
</dbReference>
<dbReference type="PANTHER" id="PTHR37003:SF2">
    <property type="entry name" value="PESTICIDAL CRYSTAL PROTEIN N-TERMINAL DOMAIN-CONTAINING PROTEIN"/>
    <property type="match status" value="1"/>
</dbReference>
<dbReference type="Pfam" id="PF17997">
    <property type="entry name" value="Cry1Ac_D5"/>
    <property type="match status" value="1"/>
</dbReference>
<dbReference type="Pfam" id="PF21463">
    <property type="entry name" value="Cry1Ac_dom-VII"/>
    <property type="match status" value="1"/>
</dbReference>
<dbReference type="Pfam" id="PF03944">
    <property type="entry name" value="Endotoxin_C"/>
    <property type="match status" value="1"/>
</dbReference>
<dbReference type="Pfam" id="PF18449">
    <property type="entry name" value="Endotoxin_C2"/>
    <property type="match status" value="1"/>
</dbReference>
<dbReference type="Pfam" id="PF00555">
    <property type="entry name" value="Endotoxin_M"/>
    <property type="match status" value="1"/>
</dbReference>
<dbReference type="Pfam" id="PF03945">
    <property type="entry name" value="Endotoxin_N"/>
    <property type="match status" value="1"/>
</dbReference>
<dbReference type="SUPFAM" id="SSF51096">
    <property type="entry name" value="delta-Endotoxin (insectocide), middle domain"/>
    <property type="match status" value="1"/>
</dbReference>
<dbReference type="SUPFAM" id="SSF56849">
    <property type="entry name" value="delta-Endotoxin (insectocide), N-terminal domain"/>
    <property type="match status" value="1"/>
</dbReference>
<dbReference type="SUPFAM" id="SSF49785">
    <property type="entry name" value="Galactose-binding domain-like"/>
    <property type="match status" value="1"/>
</dbReference>
<proteinExistence type="evidence at transcript level"/>
<sequence>MEIVNNQNQCVPYNCLNNPENEILDIERSNSTVATNIALEISRLLASATPIGGILLGLFDAIWGSIGPSQWDLFLEQIELLIDQKIEEFARNQAISRLEGISSLYGIYTEAFREWEADPTNPALKEEMRTQFNDMNSILVTAIPLFSVQNYQVPFLSVYVQAANLHLSVLRDVSVFGQAWGFDIATINSRYNDLTRLIPIYTDYAVRWYNTGLDRLPRTGGLRNWARFNQFRRELTISVLDIISFFRNYDSRLYPIPTSSQLTREVYTDPVINITDYRVGPSFENIENSAIRSPHLMDFLNNLTIDTDLIRGVHYWAGHRVTSHFTGSSQVITTPQYGITANAEPRRTIAPSTFPGLNLFYRTLSNPFFRRSENITPTLGINVVQGVGFIQPNNAEVLYRSRGTVDSLNELPIDGENSLVGYSHRLSHVTLTRSLYNTNITSLPTFVWTHHSATNTNTINPDIITQIPLVKGFRLGGGTSVIKGPGFTGGDILRRNTIGEFVSLQVNINSPITQRYRLRFRYASSRDARITVAIGGQIRVDMTLEKTMEIGESLTSRTFSYTNFSNPFSFRANPDIIRIAEELPIRGGELYIDKIELILADATFEEEYDLERAQKAVNALFTSTNQLGLKTDVTDYHIDQVSNLVECLSDEFCLDEKRELSEKVKHAKRLSDERNLLQDPNFRGINRQPDRGWRGSTDITIQGGDDVFKENYVTLPGTFDECYPTYLYQKIDESKLKAYTRYELRGYIEDSQDLEIYLIRYNAKHETVNVPGTGSLWPLSAQSPIGKCGEPNRCAPHLEWNPNLDCSCRDGEKCAHHSHHFSLDIDVGCTDLNEDLGVWVIFKIKTQDGYARLGNLEFLEENPLLGEALARVKRAEKKWRDKCEKLEWETNIVYKEAKESVDALFVNSQYDRLQADTNIAMIHAADKRVHSIREAYLPELSVIPGVNAAIFEELEGRIFTAFSLYDARNVIKNGDFNNGLSCWNVKGHVDVEEQNNHRSVLVVPEWEAEVSQEVRVCPGRGYILRVTAYKEGYGEGCVTIHEIEDNTDELKFSNCVEEEVYPNNTVTCNNYTATQEEHEGTYTSRNRGYDEAYESNSSVHASVYEEKSYTDRRRENPCESNRGYGDYTPLPAGYVTKELEYFPETDKVWIEIGETEGTFIVDSVELLLMEE</sequence>
<gene>
    <name type="primary">cry1Ea</name>
    <name type="synonym">bt11</name>
    <name type="synonym">btxI</name>
    <name type="synonym">cryIC(b)</name>
    <name type="synonym">cryIE(a)</name>
</gene>
<organism>
    <name type="scientific">Bacillus thuringiensis subsp. kenyae</name>
    <dbReference type="NCBI Taxonomy" id="33930"/>
    <lineage>
        <taxon>Bacteria</taxon>
        <taxon>Bacillati</taxon>
        <taxon>Bacillota</taxon>
        <taxon>Bacilli</taxon>
        <taxon>Bacillales</taxon>
        <taxon>Bacillaceae</taxon>
        <taxon>Bacillus</taxon>
        <taxon>Bacillus cereus group</taxon>
    </lineage>
</organism>
<protein>
    <recommendedName>
        <fullName>Pesticidal crystal protein Cry1Ea</fullName>
    </recommendedName>
    <alternativeName>
        <fullName>133 kDa crystal protein</fullName>
    </alternativeName>
    <alternativeName>
        <fullName>Crystaline entomocidal protoxin</fullName>
    </alternativeName>
    <alternativeName>
        <fullName>Insecticidal delta-endotoxin CryIE(a)</fullName>
    </alternativeName>
</protein>
<reference key="1">
    <citation type="journal article" date="1990" name="Nucleic Acids Res.">
        <title>Nucleotide sequence of a novel crystal protein gene isolated from Bacillus thuringiensis subspecies kenyae.</title>
        <authorList>
            <person name="Bosse M."/>
            <person name="Masson L."/>
            <person name="Brousseau R."/>
        </authorList>
    </citation>
    <scope>NUCLEOTIDE SEQUENCE [GENOMIC DNA]</scope>
</reference>
<reference key="2">
    <citation type="journal article" date="1990" name="J. Bacteriol.">
        <title>A novel Bacillus thuringiensis gene encoding a Spodoptera exigua-specific crystal protein.</title>
        <authorList>
            <person name="Visser B."/>
            <person name="Munsterman E."/>
            <person name="Stoker A."/>
            <person name="Dirkse W.G."/>
        </authorList>
    </citation>
    <scope>NUCLEOTIDE SEQUENCE [GENOMIC DNA]</scope>
    <source>
        <strain>4F1</strain>
    </source>
</reference>
<reference key="3">
    <citation type="patent" date="1991-08-13" number="US5039523">
        <title>Novel Bacillus thuringiensis isolate denoted B.t. PS81F, active against lepidopteran pests, and a gene encoding a lepidopteran-active toxin.</title>
        <authorList>
            <person name="Payne J.M."/>
            <person name="Sick A.J."/>
        </authorList>
    </citation>
    <scope>NUCLEOTIDE SEQUENCE [GENOMIC DNA]</scope>
    <source>
        <strain>PS81F</strain>
    </source>
</reference>
<comment type="function">
    <text>Promotes colloidosmotic lysis by binding to the midgut epithelial cells of many lepidopteran larvae including Spodoptera species.</text>
</comment>
<comment type="developmental stage">
    <text>The crystal protein is produced during sporulation and is accumulated both as an inclusion and as part of the spore coat.</text>
</comment>
<comment type="miscellaneous">
    <text>Toxic segment of the protein is located in the N-terminus.</text>
</comment>
<comment type="similarity">
    <text evidence="2">Belongs to the delta endotoxin family.</text>
</comment>
<feature type="chain" id="PRO_0000174040" description="Pesticidal crystal protein Cry1Ea">
    <location>
        <begin position="1"/>
        <end position="1171"/>
    </location>
</feature>
<feature type="region of interest" description="Disordered" evidence="1">
    <location>
        <begin position="1094"/>
        <end position="1124"/>
    </location>
</feature>
<feature type="compositionally biased region" description="Basic and acidic residues" evidence="1">
    <location>
        <begin position="1103"/>
        <end position="1117"/>
    </location>
</feature>
<feature type="sequence conflict" description="In Ref. 3; AAA22345." evidence="2" ref="3">
    <original>N</original>
    <variation>K</variation>
    <location>
        <position position="862"/>
    </location>
</feature>
<accession>Q57458</accession>
<accession>Q03741</accession>
<keyword id="KW-0749">Sporulation</keyword>
<keyword id="KW-0800">Toxin</keyword>
<keyword id="KW-0843">Virulence</keyword>
<evidence type="ECO:0000256" key="1">
    <source>
        <dbReference type="SAM" id="MobiDB-lite"/>
    </source>
</evidence>
<evidence type="ECO:0000305" key="2"/>
<name>CR1EA_BACTX</name>